<evidence type="ECO:0000250" key="1"/>
<evidence type="ECO:0000250" key="2">
    <source>
        <dbReference type="UniProtKB" id="P00441"/>
    </source>
</evidence>
<evidence type="ECO:0000250" key="3">
    <source>
        <dbReference type="UniProtKB" id="P07632"/>
    </source>
</evidence>
<evidence type="ECO:0000250" key="4">
    <source>
        <dbReference type="UniProtKB" id="P08228"/>
    </source>
</evidence>
<evidence type="ECO:0000256" key="5">
    <source>
        <dbReference type="SAM" id="MobiDB-lite"/>
    </source>
</evidence>
<evidence type="ECO:0000269" key="6">
    <source>
    </source>
</evidence>
<evidence type="ECO:0000305" key="7"/>
<sequence length="154" mass="16071">MALKAVCVLKGDGPVHGVIHFEQQQEGGPVVLKGFIEGLTKGDHGFHVHEFGDNTQGCTTAGAHFNPLSKKHGGPKDEERHVGDLGNVTADENGKADVDMKDSVISLSGKHSIIGRTMVVHEKQDDLGKGGNEESTKTGNAGSRLACGVIGIAP</sequence>
<feature type="initiator methionine" description="Removed" evidence="6">
    <location>
        <position position="1"/>
    </location>
</feature>
<feature type="chain" id="PRO_0000164056" description="Superoxide dismutase [Cu-Zn]">
    <location>
        <begin position="2"/>
        <end position="154"/>
    </location>
</feature>
<feature type="region of interest" description="Disordered" evidence="5">
    <location>
        <begin position="64"/>
        <end position="94"/>
    </location>
</feature>
<feature type="compositionally biased region" description="Basic and acidic residues" evidence="5">
    <location>
        <begin position="74"/>
        <end position="83"/>
    </location>
</feature>
<feature type="binding site" evidence="1">
    <location>
        <position position="47"/>
    </location>
    <ligand>
        <name>Cu cation</name>
        <dbReference type="ChEBI" id="CHEBI:23378"/>
        <note>catalytic</note>
    </ligand>
</feature>
<feature type="binding site" evidence="1">
    <location>
        <position position="49"/>
    </location>
    <ligand>
        <name>Cu cation</name>
        <dbReference type="ChEBI" id="CHEBI:23378"/>
        <note>catalytic</note>
    </ligand>
</feature>
<feature type="binding site" evidence="1">
    <location>
        <position position="64"/>
    </location>
    <ligand>
        <name>Cu cation</name>
        <dbReference type="ChEBI" id="CHEBI:23378"/>
        <note>catalytic</note>
    </ligand>
</feature>
<feature type="binding site" evidence="1">
    <location>
        <position position="64"/>
    </location>
    <ligand>
        <name>Zn(2+)</name>
        <dbReference type="ChEBI" id="CHEBI:29105"/>
        <note>structural</note>
    </ligand>
</feature>
<feature type="binding site" evidence="1">
    <location>
        <position position="72"/>
    </location>
    <ligand>
        <name>Zn(2+)</name>
        <dbReference type="ChEBI" id="CHEBI:29105"/>
        <note>structural</note>
    </ligand>
</feature>
<feature type="binding site" evidence="1">
    <location>
        <position position="81"/>
    </location>
    <ligand>
        <name>Zn(2+)</name>
        <dbReference type="ChEBI" id="CHEBI:29105"/>
        <note>structural</note>
    </ligand>
</feature>
<feature type="binding site" evidence="1">
    <location>
        <position position="84"/>
    </location>
    <ligand>
        <name>Zn(2+)</name>
        <dbReference type="ChEBI" id="CHEBI:29105"/>
        <note>structural</note>
    </ligand>
</feature>
<feature type="binding site" evidence="1">
    <location>
        <position position="121"/>
    </location>
    <ligand>
        <name>Cu cation</name>
        <dbReference type="ChEBI" id="CHEBI:23378"/>
        <note>catalytic</note>
    </ligand>
</feature>
<feature type="modified residue" description="N-acetylalanine" evidence="6">
    <location>
        <position position="2"/>
    </location>
</feature>
<feature type="modified residue" description="N6-succinyllysine" evidence="4">
    <location>
        <position position="4"/>
    </location>
</feature>
<feature type="modified residue" description="N6-succinyllysine" evidence="4">
    <location>
        <position position="10"/>
    </location>
</feature>
<feature type="modified residue" description="Phosphoserine" evidence="2">
    <location>
        <position position="103"/>
    </location>
</feature>
<feature type="modified residue" description="Phosphoserine" evidence="3">
    <location>
        <position position="106"/>
    </location>
</feature>
<feature type="modified residue" description="Phosphoserine" evidence="4">
    <location>
        <position position="108"/>
    </location>
</feature>
<feature type="modified residue" description="N6-acetyllysine; alternate" evidence="2">
    <location>
        <position position="123"/>
    </location>
</feature>
<feature type="modified residue" description="N6-succinyllysine; alternate" evidence="2">
    <location>
        <position position="123"/>
    </location>
</feature>
<feature type="modified residue" description="N6-acetyllysine; alternate" evidence="4">
    <location>
        <position position="137"/>
    </location>
</feature>
<feature type="modified residue" description="N6-succinyllysine; alternate" evidence="4">
    <location>
        <position position="137"/>
    </location>
</feature>
<feature type="lipid moiety-binding region" description="S-palmitoyl cysteine" evidence="1">
    <location>
        <position position="7"/>
    </location>
</feature>
<feature type="disulfide bond" evidence="1">
    <location>
        <begin position="58"/>
        <end position="147"/>
    </location>
</feature>
<dbReference type="EC" id="1.15.1.1" evidence="2"/>
<dbReference type="EMBL" id="U38956">
    <property type="protein sequence ID" value="AAC48682.1"/>
    <property type="molecule type" value="mRNA"/>
</dbReference>
<dbReference type="EMBL" id="AB001692">
    <property type="protein sequence ID" value="BAA76921.1"/>
    <property type="molecule type" value="mRNA"/>
</dbReference>
<dbReference type="PIR" id="JC5215">
    <property type="entry name" value="DSHOCZ"/>
</dbReference>
<dbReference type="RefSeq" id="NP_001075295.1">
    <property type="nucleotide sequence ID" value="NM_001081826.3"/>
</dbReference>
<dbReference type="SMR" id="P00443"/>
<dbReference type="FunCoup" id="P00443">
    <property type="interactions" value="1505"/>
</dbReference>
<dbReference type="STRING" id="9796.ENSECAP00000041593"/>
<dbReference type="iPTMnet" id="P00443"/>
<dbReference type="PaxDb" id="9796-ENSECAP00000041593"/>
<dbReference type="PeptideAtlas" id="P00443"/>
<dbReference type="GeneID" id="100033855"/>
<dbReference type="KEGG" id="ecb:100033855"/>
<dbReference type="CTD" id="6647"/>
<dbReference type="InParanoid" id="P00443"/>
<dbReference type="OMA" id="AQRGFHI"/>
<dbReference type="OrthoDB" id="2015551at2759"/>
<dbReference type="Proteomes" id="UP000002281">
    <property type="component" value="Chromosome 26"/>
</dbReference>
<dbReference type="Bgee" id="ENSECAG00000008958">
    <property type="expression patterns" value="Expressed in liver and 23 other cell types or tissues"/>
</dbReference>
<dbReference type="ExpressionAtlas" id="P00443">
    <property type="expression patterns" value="baseline"/>
</dbReference>
<dbReference type="GO" id="GO:0005829">
    <property type="term" value="C:cytosol"/>
    <property type="evidence" value="ECO:0000318"/>
    <property type="project" value="GO_Central"/>
</dbReference>
<dbReference type="GO" id="GO:0005739">
    <property type="term" value="C:mitochondrion"/>
    <property type="evidence" value="ECO:0000318"/>
    <property type="project" value="GO_Central"/>
</dbReference>
<dbReference type="GO" id="GO:0005634">
    <property type="term" value="C:nucleus"/>
    <property type="evidence" value="ECO:0000318"/>
    <property type="project" value="GO_Central"/>
</dbReference>
<dbReference type="GO" id="GO:0005777">
    <property type="term" value="C:peroxisome"/>
    <property type="evidence" value="ECO:0000318"/>
    <property type="project" value="GO_Central"/>
</dbReference>
<dbReference type="GO" id="GO:0005507">
    <property type="term" value="F:copper ion binding"/>
    <property type="evidence" value="ECO:0000318"/>
    <property type="project" value="GO_Central"/>
</dbReference>
<dbReference type="GO" id="GO:0004784">
    <property type="term" value="F:superoxide dismutase activity"/>
    <property type="evidence" value="ECO:0000250"/>
    <property type="project" value="UniProtKB"/>
</dbReference>
<dbReference type="GO" id="GO:0072593">
    <property type="term" value="P:reactive oxygen species metabolic process"/>
    <property type="evidence" value="ECO:0000250"/>
    <property type="project" value="UniProtKB"/>
</dbReference>
<dbReference type="GO" id="GO:0019430">
    <property type="term" value="P:removal of superoxide radicals"/>
    <property type="evidence" value="ECO:0000250"/>
    <property type="project" value="UniProtKB"/>
</dbReference>
<dbReference type="CDD" id="cd00305">
    <property type="entry name" value="Cu-Zn_Superoxide_Dismutase"/>
    <property type="match status" value="1"/>
</dbReference>
<dbReference type="FunFam" id="2.60.40.200:FF:000001">
    <property type="entry name" value="Superoxide dismutase [Cu-Zn]"/>
    <property type="match status" value="1"/>
</dbReference>
<dbReference type="Gene3D" id="2.60.40.200">
    <property type="entry name" value="Superoxide dismutase, copper/zinc binding domain"/>
    <property type="match status" value="1"/>
</dbReference>
<dbReference type="InterPro" id="IPR036423">
    <property type="entry name" value="SOD-like_Cu/Zn_dom_sf"/>
</dbReference>
<dbReference type="InterPro" id="IPR024134">
    <property type="entry name" value="SOD_Cu/Zn_/chaperone"/>
</dbReference>
<dbReference type="InterPro" id="IPR018152">
    <property type="entry name" value="SOD_Cu/Zn_BS"/>
</dbReference>
<dbReference type="InterPro" id="IPR001424">
    <property type="entry name" value="SOD_Cu_Zn_dom"/>
</dbReference>
<dbReference type="PANTHER" id="PTHR10003">
    <property type="entry name" value="SUPEROXIDE DISMUTASE CU-ZN -RELATED"/>
    <property type="match status" value="1"/>
</dbReference>
<dbReference type="Pfam" id="PF00080">
    <property type="entry name" value="Sod_Cu"/>
    <property type="match status" value="1"/>
</dbReference>
<dbReference type="PRINTS" id="PR00068">
    <property type="entry name" value="CUZNDISMTASE"/>
</dbReference>
<dbReference type="SUPFAM" id="SSF49329">
    <property type="entry name" value="Cu,Zn superoxide dismutase-like"/>
    <property type="match status" value="1"/>
</dbReference>
<dbReference type="PROSITE" id="PS00087">
    <property type="entry name" value="SOD_CU_ZN_1"/>
    <property type="match status" value="1"/>
</dbReference>
<dbReference type="PROSITE" id="PS00332">
    <property type="entry name" value="SOD_CU_ZN_2"/>
    <property type="match status" value="1"/>
</dbReference>
<organism>
    <name type="scientific">Equus caballus</name>
    <name type="common">Horse</name>
    <dbReference type="NCBI Taxonomy" id="9796"/>
    <lineage>
        <taxon>Eukaryota</taxon>
        <taxon>Metazoa</taxon>
        <taxon>Chordata</taxon>
        <taxon>Craniata</taxon>
        <taxon>Vertebrata</taxon>
        <taxon>Euteleostomi</taxon>
        <taxon>Mammalia</taxon>
        <taxon>Eutheria</taxon>
        <taxon>Laurasiatheria</taxon>
        <taxon>Perissodactyla</taxon>
        <taxon>Equidae</taxon>
        <taxon>Equus</taxon>
    </lineage>
</organism>
<comment type="function">
    <text>Destroys radicals which are normally produced within the cells and which are toxic to biological systems.</text>
</comment>
<comment type="catalytic activity">
    <reaction>
        <text>2 superoxide + 2 H(+) = H2O2 + O2</text>
        <dbReference type="Rhea" id="RHEA:20696"/>
        <dbReference type="ChEBI" id="CHEBI:15378"/>
        <dbReference type="ChEBI" id="CHEBI:15379"/>
        <dbReference type="ChEBI" id="CHEBI:16240"/>
        <dbReference type="ChEBI" id="CHEBI:18421"/>
        <dbReference type="EC" id="1.15.1.1"/>
    </reaction>
</comment>
<comment type="cofactor">
    <cofactor evidence="1">
        <name>Cu cation</name>
        <dbReference type="ChEBI" id="CHEBI:23378"/>
    </cofactor>
    <text evidence="1">Binds 1 copper ion per subunit.</text>
</comment>
<comment type="cofactor">
    <cofactor evidence="1">
        <name>Zn(2+)</name>
        <dbReference type="ChEBI" id="CHEBI:29105"/>
    </cofactor>
    <text evidence="1">Binds 1 zinc ion per subunit.</text>
</comment>
<comment type="subunit">
    <text evidence="2 4">Homodimer; non-disulfide-linked (By similarity). Heterodimer with SOD1. The heterodimer CCS:SOD1 interacts with SLC31A1; this heterotrimer is Cu(1+)-mediated and its maintenance is regulated through SOD1 activation (By similarity).</text>
</comment>
<comment type="subcellular location">
    <subcellularLocation>
        <location>Cytoplasm</location>
    </subcellularLocation>
    <subcellularLocation>
        <location evidence="1">Nucleus</location>
    </subcellularLocation>
</comment>
<comment type="PTM">
    <text evidence="1">Palmitoylation helps nuclear targeting and decreases catalytic activity.</text>
</comment>
<comment type="PTM">
    <text evidence="2">Succinylation, adjacent to copper catalytic site, probably inhibits activity. Desuccinylation by SIRT5 enhances activity.</text>
</comment>
<comment type="similarity">
    <text evidence="7">Belongs to the Cu-Zn superoxide dismutase family.</text>
</comment>
<keyword id="KW-0007">Acetylation</keyword>
<keyword id="KW-0049">Antioxidant</keyword>
<keyword id="KW-0186">Copper</keyword>
<keyword id="KW-0963">Cytoplasm</keyword>
<keyword id="KW-0903">Direct protein sequencing</keyword>
<keyword id="KW-1015">Disulfide bond</keyword>
<keyword id="KW-0449">Lipoprotein</keyword>
<keyword id="KW-0479">Metal-binding</keyword>
<keyword id="KW-0539">Nucleus</keyword>
<keyword id="KW-0560">Oxidoreductase</keyword>
<keyword id="KW-0564">Palmitate</keyword>
<keyword id="KW-0597">Phosphoprotein</keyword>
<keyword id="KW-1185">Reference proteome</keyword>
<keyword id="KW-0862">Zinc</keyword>
<protein>
    <recommendedName>
        <fullName evidence="2">Superoxide dismutase [Cu-Zn]</fullName>
        <ecNumber evidence="2">1.15.1.1</ecNumber>
    </recommendedName>
</protein>
<name>SODC_HORSE</name>
<reference key="1">
    <citation type="journal article" date="1996" name="Gene">
        <title>Equine motor neuron disease is not linked to Cu/Zn superoxide dismutase mutations: sequence analysis of the equine Cu/Zn superoxide dismutase cDNA.</title>
        <authorList>
            <person name="de la Rua-Domenech R."/>
            <person name="Wiedmann M."/>
            <person name="Mohammed H.O."/>
            <person name="Cummings J.F."/>
            <person name="Divers T.J."/>
            <person name="Batt C.A."/>
        </authorList>
    </citation>
    <scope>NUCLEOTIDE SEQUENCE [MRNA]</scope>
</reference>
<reference key="2">
    <citation type="journal article" date="1999" name="J. Vet. Med. Sci.">
        <title>The cDNA sequences of equine antioxidative enzyme genes Cu/Zn-SOD and Mn-SOD, and these expressions in equine tissues.</title>
        <authorList>
            <person name="Ishida N."/>
            <person name="Katayama Y."/>
            <person name="Sato F."/>
            <person name="Hasegawa T."/>
            <person name="Mukoyama H."/>
        </authorList>
    </citation>
    <scope>NUCLEOTIDE SEQUENCE [MRNA]</scope>
    <source>
        <tissue>Testis</tissue>
    </source>
</reference>
<reference key="3">
    <citation type="journal article" date="1981" name="J. Biol. Chem.">
        <title>Amino acid sequence of copper-zinc superoxide dismutase from horse liver.</title>
        <authorList>
            <person name="Lerch K."/>
            <person name="Ammer D."/>
        </authorList>
    </citation>
    <scope>PROTEIN SEQUENCE OF 2-154</scope>
    <scope>ACETYLATION AT ALA-2</scope>
    <source>
        <tissue>Liver</tissue>
    </source>
</reference>
<proteinExistence type="evidence at protein level"/>
<gene>
    <name evidence="2" type="primary">SOD1</name>
</gene>
<accession>P00443</accession>